<proteinExistence type="inferred from homology"/>
<keyword id="KW-0325">Glycoprotein</keyword>
<keyword id="KW-0378">Hydrolase</keyword>
<keyword id="KW-0460">Magnesium</keyword>
<keyword id="KW-0479">Metal-binding</keyword>
<keyword id="KW-1185">Reference proteome</keyword>
<keyword id="KW-0964">Secreted</keyword>
<keyword id="KW-0732">Signal</keyword>
<comment type="function">
    <text>Probably serves to scavenge phosphorus for growing cells.</text>
</comment>
<comment type="catalytic activity">
    <reaction>
        <text>a phosphate monoester + H2O = an alcohol + phosphate</text>
        <dbReference type="Rhea" id="RHEA:15017"/>
        <dbReference type="ChEBI" id="CHEBI:15377"/>
        <dbReference type="ChEBI" id="CHEBI:30879"/>
        <dbReference type="ChEBI" id="CHEBI:43474"/>
        <dbReference type="ChEBI" id="CHEBI:67140"/>
        <dbReference type="EC" id="3.1.3.2"/>
    </reaction>
</comment>
<comment type="cofactor">
    <cofactor evidence="1">
        <name>Mg(2+)</name>
        <dbReference type="ChEBI" id="CHEBI:18420"/>
    </cofactor>
</comment>
<comment type="subcellular location">
    <subcellularLocation>
        <location>Secreted</location>
    </subcellularLocation>
</comment>
<comment type="similarity">
    <text evidence="4">Belongs to the SurE nucleotidase family.</text>
</comment>
<name>PHO2_YARLI</name>
<organism>
    <name type="scientific">Yarrowia lipolytica (strain CLIB 122 / E 150)</name>
    <name type="common">Yeast</name>
    <name type="synonym">Candida lipolytica</name>
    <dbReference type="NCBI Taxonomy" id="284591"/>
    <lineage>
        <taxon>Eukaryota</taxon>
        <taxon>Fungi</taxon>
        <taxon>Dikarya</taxon>
        <taxon>Ascomycota</taxon>
        <taxon>Saccharomycotina</taxon>
        <taxon>Dipodascomycetes</taxon>
        <taxon>Dipodascales</taxon>
        <taxon>Dipodascales incertae sedis</taxon>
        <taxon>Yarrowia</taxon>
    </lineage>
</organism>
<evidence type="ECO:0000250" key="1"/>
<evidence type="ECO:0000255" key="2"/>
<evidence type="ECO:0000256" key="3">
    <source>
        <dbReference type="SAM" id="MobiDB-lite"/>
    </source>
</evidence>
<evidence type="ECO:0000305" key="4"/>
<protein>
    <recommendedName>
        <fullName>Acid phosphatase</fullName>
        <ecNumber>3.1.3.2</ecNumber>
    </recommendedName>
</protein>
<accession>P30887</accession>
<accession>Q6CAE8</accession>
<gene>
    <name type="primary">PHO2</name>
    <name type="ordered locus">YALI0D03465g</name>
</gene>
<feature type="signal peptide" evidence="2">
    <location>
        <begin position="1"/>
        <end position="17"/>
    </location>
</feature>
<feature type="chain" id="PRO_0000033476" description="Acid phosphatase">
    <location>
        <begin position="18"/>
        <end position="358"/>
    </location>
</feature>
<feature type="region of interest" description="Disordered" evidence="3">
    <location>
        <begin position="21"/>
        <end position="41"/>
    </location>
</feature>
<feature type="active site" evidence="2">
    <location>
        <position position="189"/>
    </location>
</feature>
<feature type="binding site" evidence="1">
    <location>
        <position position="49"/>
    </location>
    <ligand>
        <name>Mg(2+)</name>
        <dbReference type="ChEBI" id="CHEBI:18420"/>
    </ligand>
</feature>
<feature type="binding site" evidence="1">
    <location>
        <position position="50"/>
    </location>
    <ligand>
        <name>Mg(2+)</name>
        <dbReference type="ChEBI" id="CHEBI:18420"/>
    </ligand>
</feature>
<feature type="binding site" evidence="1">
    <location>
        <position position="81"/>
    </location>
    <ligand>
        <name>Mg(2+)</name>
        <dbReference type="ChEBI" id="CHEBI:18420"/>
    </ligand>
</feature>
<feature type="binding site" evidence="1">
    <location>
        <position position="156"/>
    </location>
    <ligand>
        <name>Mg(2+)</name>
        <dbReference type="ChEBI" id="CHEBI:18420"/>
    </ligand>
</feature>
<feature type="glycosylation site" description="N-linked (GlcNAc...) asparagine" evidence="2">
    <location>
        <position position="20"/>
    </location>
</feature>
<feature type="glycosylation site" description="N-linked (GlcNAc...) asparagine" evidence="2">
    <location>
        <position position="27"/>
    </location>
</feature>
<feature type="glycosylation site" description="N-linked (GlcNAc...) asparagine" evidence="2">
    <location>
        <position position="32"/>
    </location>
</feature>
<feature type="glycosylation site" description="N-linked (GlcNAc...) asparagine" evidence="2">
    <location>
        <position position="92"/>
    </location>
</feature>
<feature type="glycosylation site" description="N-linked (GlcNAc...) asparagine" evidence="2">
    <location>
        <position position="145"/>
    </location>
</feature>
<feature type="glycosylation site" description="N-linked (GlcNAc...) asparagine" evidence="2">
    <location>
        <position position="199"/>
    </location>
</feature>
<feature type="glycosylation site" description="N-linked (GlcNAc...) asparagine" evidence="2">
    <location>
        <position position="278"/>
    </location>
</feature>
<feature type="sequence conflict" description="In Ref. 1; CAA46331." evidence="4" ref="1">
    <original>G</original>
    <variation>V</variation>
    <location>
        <position position="228"/>
    </location>
</feature>
<dbReference type="EC" id="3.1.3.2"/>
<dbReference type="EMBL" id="X65225">
    <property type="protein sequence ID" value="CAA46331.1"/>
    <property type="molecule type" value="Genomic_DNA"/>
</dbReference>
<dbReference type="EMBL" id="CR382130">
    <property type="protein sequence ID" value="CAG80552.1"/>
    <property type="molecule type" value="Genomic_DNA"/>
</dbReference>
<dbReference type="PIR" id="S19993">
    <property type="entry name" value="S19993"/>
</dbReference>
<dbReference type="RefSeq" id="XP_502364.1">
    <property type="nucleotide sequence ID" value="XM_502364.1"/>
</dbReference>
<dbReference type="SMR" id="P30887"/>
<dbReference type="STRING" id="284591.P30887"/>
<dbReference type="GlyCosmos" id="P30887">
    <property type="glycosylation" value="7 sites, No reported glycans"/>
</dbReference>
<dbReference type="EnsemblFungi" id="CAG80552">
    <property type="protein sequence ID" value="CAG80552"/>
    <property type="gene ID" value="YALI0_D03465g"/>
</dbReference>
<dbReference type="KEGG" id="yli:2910307"/>
<dbReference type="VEuPathDB" id="FungiDB:YALI0_D03465g"/>
<dbReference type="HOGENOM" id="CLU_045192_0_0_1"/>
<dbReference type="InParanoid" id="P30887"/>
<dbReference type="OMA" id="DSHIWYY"/>
<dbReference type="OrthoDB" id="110702at4891"/>
<dbReference type="Proteomes" id="UP000001300">
    <property type="component" value="Chromosome D"/>
</dbReference>
<dbReference type="GO" id="GO:0005576">
    <property type="term" value="C:extracellular region"/>
    <property type="evidence" value="ECO:0007669"/>
    <property type="project" value="UniProtKB-SubCell"/>
</dbReference>
<dbReference type="GO" id="GO:0003993">
    <property type="term" value="F:acid phosphatase activity"/>
    <property type="evidence" value="ECO:0007669"/>
    <property type="project" value="UniProtKB-EC"/>
</dbReference>
<dbReference type="GO" id="GO:0046872">
    <property type="term" value="F:metal ion binding"/>
    <property type="evidence" value="ECO:0007669"/>
    <property type="project" value="UniProtKB-KW"/>
</dbReference>
<dbReference type="GO" id="GO:0008252">
    <property type="term" value="F:nucleotidase activity"/>
    <property type="evidence" value="ECO:0007669"/>
    <property type="project" value="InterPro"/>
</dbReference>
<dbReference type="Gene3D" id="3.40.1210.10">
    <property type="entry name" value="Survival protein SurE-like phosphatase/nucleotidase"/>
    <property type="match status" value="1"/>
</dbReference>
<dbReference type="InterPro" id="IPR030048">
    <property type="entry name" value="SurE"/>
</dbReference>
<dbReference type="InterPro" id="IPR002828">
    <property type="entry name" value="SurE-like_Pase/nucleotidase"/>
</dbReference>
<dbReference type="InterPro" id="IPR036523">
    <property type="entry name" value="SurE-like_sf"/>
</dbReference>
<dbReference type="NCBIfam" id="TIGR00087">
    <property type="entry name" value="surE"/>
    <property type="match status" value="1"/>
</dbReference>
<dbReference type="PANTHER" id="PTHR30457">
    <property type="entry name" value="5'-NUCLEOTIDASE SURE"/>
    <property type="match status" value="1"/>
</dbReference>
<dbReference type="PANTHER" id="PTHR30457:SF0">
    <property type="entry name" value="PHOSPHATASE, PUTATIVE (AFU_ORTHOLOGUE AFUA_4G01070)-RELATED"/>
    <property type="match status" value="1"/>
</dbReference>
<dbReference type="Pfam" id="PF01975">
    <property type="entry name" value="SurE"/>
    <property type="match status" value="1"/>
</dbReference>
<dbReference type="SUPFAM" id="SSF64167">
    <property type="entry name" value="SurE-like"/>
    <property type="match status" value="1"/>
</dbReference>
<reference key="1">
    <citation type="journal article" date="1992" name="Curr. Genet.">
        <title>Complementation of Saccharomyces cerevisiae acid phosphatase mutation by a genomic sequence from the yeast Yarrowia lipolytica identifies a new phosphatase.</title>
        <authorList>
            <person name="Treton B.Y."/>
            <person name="le Dall M.-T."/>
            <person name="Gaillardin C."/>
        </authorList>
    </citation>
    <scope>NUCLEOTIDE SEQUENCE [GENOMIC DNA]</scope>
    <source>
        <strain>ATCC 20460 / W29 / CBS 7504 / IFP29</strain>
    </source>
</reference>
<reference key="2">
    <citation type="journal article" date="2004" name="Nature">
        <title>Genome evolution in yeasts.</title>
        <authorList>
            <person name="Dujon B."/>
            <person name="Sherman D."/>
            <person name="Fischer G."/>
            <person name="Durrens P."/>
            <person name="Casaregola S."/>
            <person name="Lafontaine I."/>
            <person name="de Montigny J."/>
            <person name="Marck C."/>
            <person name="Neuveglise C."/>
            <person name="Talla E."/>
            <person name="Goffard N."/>
            <person name="Frangeul L."/>
            <person name="Aigle M."/>
            <person name="Anthouard V."/>
            <person name="Babour A."/>
            <person name="Barbe V."/>
            <person name="Barnay S."/>
            <person name="Blanchin S."/>
            <person name="Beckerich J.-M."/>
            <person name="Beyne E."/>
            <person name="Bleykasten C."/>
            <person name="Boisrame A."/>
            <person name="Boyer J."/>
            <person name="Cattolico L."/>
            <person name="Confanioleri F."/>
            <person name="de Daruvar A."/>
            <person name="Despons L."/>
            <person name="Fabre E."/>
            <person name="Fairhead C."/>
            <person name="Ferry-Dumazet H."/>
            <person name="Groppi A."/>
            <person name="Hantraye F."/>
            <person name="Hennequin C."/>
            <person name="Jauniaux N."/>
            <person name="Joyet P."/>
            <person name="Kachouri R."/>
            <person name="Kerrest A."/>
            <person name="Koszul R."/>
            <person name="Lemaire M."/>
            <person name="Lesur I."/>
            <person name="Ma L."/>
            <person name="Muller H."/>
            <person name="Nicaud J.-M."/>
            <person name="Nikolski M."/>
            <person name="Oztas S."/>
            <person name="Ozier-Kalogeropoulos O."/>
            <person name="Pellenz S."/>
            <person name="Potier S."/>
            <person name="Richard G.-F."/>
            <person name="Straub M.-L."/>
            <person name="Suleau A."/>
            <person name="Swennen D."/>
            <person name="Tekaia F."/>
            <person name="Wesolowski-Louvel M."/>
            <person name="Westhof E."/>
            <person name="Wirth B."/>
            <person name="Zeniou-Meyer M."/>
            <person name="Zivanovic Y."/>
            <person name="Bolotin-Fukuhara M."/>
            <person name="Thierry A."/>
            <person name="Bouchier C."/>
            <person name="Caudron B."/>
            <person name="Scarpelli C."/>
            <person name="Gaillardin C."/>
            <person name="Weissenbach J."/>
            <person name="Wincker P."/>
            <person name="Souciet J.-L."/>
        </authorList>
    </citation>
    <scope>NUCLEOTIDE SEQUENCE [LARGE SCALE GENOMIC DNA]</scope>
    <source>
        <strain>CLIB 122 / E 150</strain>
    </source>
</reference>
<sequence>MKFSTIALPLLASAALAQTNSSHSGTNATSHNSTVPNENSKTTIVVTNDDSWASANIRAFYDELKKEGYNVFMFAPALQQSGTGGTFVLPKNTTLAKGAEWGSAPVGAPAWGQDEKDDHIWYFDGTPGAAVTFGFDYALPKFHNNITVDLVVSGPNEGWNLGPFVYTLSGTEGAMYTSVLRGVPAIAFSGENKHTYYANASNSETASHNIYAKASTAIVKNLLKNAKGRPSVLPYGVGLSVNLPLVGDIDPTGKCTDPKPIFTRQTGRGAITDKLVFNETTGLFKYGDIKSDATKACLNGDCFLPDETDVINNWGCYSSISVVSTDYDAPGALAAEAQFLNRGLVEFAPTGYGSFPGN</sequence>